<evidence type="ECO:0000255" key="1">
    <source>
        <dbReference type="HAMAP-Rule" id="MF_00197"/>
    </source>
</evidence>
<name>DAPF_NITHX</name>
<gene>
    <name evidence="1" type="primary">dapF</name>
    <name type="ordered locus">Nham_3575</name>
</gene>
<organism>
    <name type="scientific">Nitrobacter hamburgensis (strain DSM 10229 / NCIMB 13809 / X14)</name>
    <dbReference type="NCBI Taxonomy" id="323097"/>
    <lineage>
        <taxon>Bacteria</taxon>
        <taxon>Pseudomonadati</taxon>
        <taxon>Pseudomonadota</taxon>
        <taxon>Alphaproteobacteria</taxon>
        <taxon>Hyphomicrobiales</taxon>
        <taxon>Nitrobacteraceae</taxon>
        <taxon>Nitrobacter</taxon>
    </lineage>
</organism>
<protein>
    <recommendedName>
        <fullName evidence="1">Diaminopimelate epimerase</fullName>
        <shortName evidence="1">DAP epimerase</shortName>
        <ecNumber evidence="1">5.1.1.7</ecNumber>
    </recommendedName>
    <alternativeName>
        <fullName evidence="1">PLP-independent amino acid racemase</fullName>
    </alternativeName>
</protein>
<reference key="1">
    <citation type="submission" date="2006-03" db="EMBL/GenBank/DDBJ databases">
        <title>Complete sequence of chromosome of Nitrobacter hamburgensis X14.</title>
        <authorList>
            <consortium name="US DOE Joint Genome Institute"/>
            <person name="Copeland A."/>
            <person name="Lucas S."/>
            <person name="Lapidus A."/>
            <person name="Barry K."/>
            <person name="Detter J.C."/>
            <person name="Glavina del Rio T."/>
            <person name="Hammon N."/>
            <person name="Israni S."/>
            <person name="Dalin E."/>
            <person name="Tice H."/>
            <person name="Pitluck S."/>
            <person name="Chain P."/>
            <person name="Malfatti S."/>
            <person name="Shin M."/>
            <person name="Vergez L."/>
            <person name="Schmutz J."/>
            <person name="Larimer F."/>
            <person name="Land M."/>
            <person name="Hauser L."/>
            <person name="Kyrpides N."/>
            <person name="Ivanova N."/>
            <person name="Ward B."/>
            <person name="Arp D."/>
            <person name="Klotz M."/>
            <person name="Stein L."/>
            <person name="O'Mullan G."/>
            <person name="Starkenburg S."/>
            <person name="Sayavedra L."/>
            <person name="Poret-Peterson A.T."/>
            <person name="Gentry M.E."/>
            <person name="Bruce D."/>
            <person name="Richardson P."/>
        </authorList>
    </citation>
    <scope>NUCLEOTIDE SEQUENCE [LARGE SCALE GENOMIC DNA]</scope>
    <source>
        <strain>DSM 10229 / NCIMB 13809 / X14</strain>
    </source>
</reference>
<keyword id="KW-0028">Amino-acid biosynthesis</keyword>
<keyword id="KW-0963">Cytoplasm</keyword>
<keyword id="KW-0413">Isomerase</keyword>
<keyword id="KW-0457">Lysine biosynthesis</keyword>
<keyword id="KW-1185">Reference proteome</keyword>
<accession>Q1QHJ3</accession>
<dbReference type="EC" id="5.1.1.7" evidence="1"/>
<dbReference type="EMBL" id="CP000319">
    <property type="protein sequence ID" value="ABE64304.1"/>
    <property type="molecule type" value="Genomic_DNA"/>
</dbReference>
<dbReference type="RefSeq" id="WP_011511945.1">
    <property type="nucleotide sequence ID" value="NC_007964.1"/>
</dbReference>
<dbReference type="SMR" id="Q1QHJ3"/>
<dbReference type="STRING" id="323097.Nham_3575"/>
<dbReference type="KEGG" id="nha:Nham_3575"/>
<dbReference type="eggNOG" id="COG0253">
    <property type="taxonomic scope" value="Bacteria"/>
</dbReference>
<dbReference type="HOGENOM" id="CLU_053306_1_0_5"/>
<dbReference type="OrthoDB" id="9805408at2"/>
<dbReference type="UniPathway" id="UPA00034">
    <property type="reaction ID" value="UER00025"/>
</dbReference>
<dbReference type="Proteomes" id="UP000001953">
    <property type="component" value="Chromosome"/>
</dbReference>
<dbReference type="GO" id="GO:0005829">
    <property type="term" value="C:cytosol"/>
    <property type="evidence" value="ECO:0007669"/>
    <property type="project" value="TreeGrafter"/>
</dbReference>
<dbReference type="GO" id="GO:0008837">
    <property type="term" value="F:diaminopimelate epimerase activity"/>
    <property type="evidence" value="ECO:0007669"/>
    <property type="project" value="UniProtKB-UniRule"/>
</dbReference>
<dbReference type="GO" id="GO:0009089">
    <property type="term" value="P:lysine biosynthetic process via diaminopimelate"/>
    <property type="evidence" value="ECO:0007669"/>
    <property type="project" value="UniProtKB-UniRule"/>
</dbReference>
<dbReference type="FunFam" id="3.10.310.10:FF:000004">
    <property type="entry name" value="Diaminopimelate epimerase"/>
    <property type="match status" value="1"/>
</dbReference>
<dbReference type="Gene3D" id="3.10.310.10">
    <property type="entry name" value="Diaminopimelate Epimerase, Chain A, domain 1"/>
    <property type="match status" value="2"/>
</dbReference>
<dbReference type="HAMAP" id="MF_00197">
    <property type="entry name" value="DAP_epimerase"/>
    <property type="match status" value="1"/>
</dbReference>
<dbReference type="InterPro" id="IPR018510">
    <property type="entry name" value="DAP_epimerase_AS"/>
</dbReference>
<dbReference type="InterPro" id="IPR001653">
    <property type="entry name" value="DAP_epimerase_DapF"/>
</dbReference>
<dbReference type="NCBIfam" id="TIGR00652">
    <property type="entry name" value="DapF"/>
    <property type="match status" value="1"/>
</dbReference>
<dbReference type="PANTHER" id="PTHR31689:SF0">
    <property type="entry name" value="DIAMINOPIMELATE EPIMERASE"/>
    <property type="match status" value="1"/>
</dbReference>
<dbReference type="PANTHER" id="PTHR31689">
    <property type="entry name" value="DIAMINOPIMELATE EPIMERASE, CHLOROPLASTIC"/>
    <property type="match status" value="1"/>
</dbReference>
<dbReference type="Pfam" id="PF01678">
    <property type="entry name" value="DAP_epimerase"/>
    <property type="match status" value="2"/>
</dbReference>
<dbReference type="SUPFAM" id="SSF54506">
    <property type="entry name" value="Diaminopimelate epimerase-like"/>
    <property type="match status" value="2"/>
</dbReference>
<dbReference type="PROSITE" id="PS01326">
    <property type="entry name" value="DAP_EPIMERASE"/>
    <property type="match status" value="1"/>
</dbReference>
<comment type="function">
    <text evidence="1">Catalyzes the stereoinversion of LL-2,6-diaminopimelate (L,L-DAP) to meso-diaminopimelate (meso-DAP), a precursor of L-lysine and an essential component of the bacterial peptidoglycan.</text>
</comment>
<comment type="catalytic activity">
    <reaction evidence="1">
        <text>(2S,6S)-2,6-diaminopimelate = meso-2,6-diaminopimelate</text>
        <dbReference type="Rhea" id="RHEA:15393"/>
        <dbReference type="ChEBI" id="CHEBI:57609"/>
        <dbReference type="ChEBI" id="CHEBI:57791"/>
        <dbReference type="EC" id="5.1.1.7"/>
    </reaction>
</comment>
<comment type="pathway">
    <text evidence="1">Amino-acid biosynthesis; L-lysine biosynthesis via DAP pathway; DL-2,6-diaminopimelate from LL-2,6-diaminopimelate: step 1/1.</text>
</comment>
<comment type="subunit">
    <text evidence="1">Homodimer.</text>
</comment>
<comment type="subcellular location">
    <subcellularLocation>
        <location evidence="1">Cytoplasm</location>
    </subcellularLocation>
</comment>
<comment type="similarity">
    <text evidence="1">Belongs to the diaminopimelate epimerase family.</text>
</comment>
<proteinExistence type="inferred from homology"/>
<feature type="chain" id="PRO_1000011917" description="Diaminopimelate epimerase">
    <location>
        <begin position="1"/>
        <end position="290"/>
    </location>
</feature>
<feature type="active site" description="Proton donor" evidence="1">
    <location>
        <position position="78"/>
    </location>
</feature>
<feature type="active site" description="Proton acceptor" evidence="1">
    <location>
        <position position="226"/>
    </location>
</feature>
<feature type="binding site" evidence="1">
    <location>
        <position position="17"/>
    </location>
    <ligand>
        <name>substrate</name>
    </ligand>
</feature>
<feature type="binding site" evidence="1">
    <location>
        <position position="49"/>
    </location>
    <ligand>
        <name>substrate</name>
    </ligand>
</feature>
<feature type="binding site" evidence="1">
    <location>
        <position position="69"/>
    </location>
    <ligand>
        <name>substrate</name>
    </ligand>
</feature>
<feature type="binding site" evidence="1">
    <location>
        <begin position="79"/>
        <end position="80"/>
    </location>
    <ligand>
        <name>substrate</name>
    </ligand>
</feature>
<feature type="binding site" evidence="1">
    <location>
        <position position="166"/>
    </location>
    <ligand>
        <name>substrate</name>
    </ligand>
</feature>
<feature type="binding site" evidence="1">
    <location>
        <position position="199"/>
    </location>
    <ligand>
        <name>substrate</name>
    </ligand>
</feature>
<feature type="binding site" evidence="1">
    <location>
        <begin position="217"/>
        <end position="218"/>
    </location>
    <ligand>
        <name>substrate</name>
    </ligand>
</feature>
<feature type="binding site" evidence="1">
    <location>
        <begin position="227"/>
        <end position="228"/>
    </location>
    <ligand>
        <name>substrate</name>
    </ligand>
</feature>
<feature type="site" description="Could be important to modulate the pK values of the two catalytic cysteine residues" evidence="1">
    <location>
        <position position="168"/>
    </location>
</feature>
<feature type="site" description="Could be important to modulate the pK values of the two catalytic cysteine residues" evidence="1">
    <location>
        <position position="217"/>
    </location>
</feature>
<sequence length="290" mass="31239">MGTLANHAFSKMNGIGNEIVVVDLRDRPAAVTAEEARAVASPGGVPYDQLMVLQPPRLPGTEAFVSIYNNDGSEANACGNGMRCVARQVFEATGKAALTFETRAGLLSCWQGPAPGLYTVDMGPPKFGWRDIPLAEEFRDTRYIELQVGPIDAPVLHSPSVVSMGNPHAIFWVDDVNAHDLERFGPLLENHPIFPERANITLAHIAGRDRIVMRTWERGAGMTKACGSAACATAVAAARLKRADRVVDMVLPGGGLTIEWRERDDHVLMTGPAVFEYAGTFDPALFASVA</sequence>